<protein>
    <recommendedName>
        <fullName>Zinc finger and BTB domain-containing protein 3</fullName>
    </recommendedName>
</protein>
<comment type="function">
    <text>May be involved in transcriptional regulation.</text>
</comment>
<comment type="subcellular location">
    <subcellularLocation>
        <location evidence="5">Nucleus</location>
    </subcellularLocation>
</comment>
<comment type="sequence caution" evidence="5">
    <conflict type="erroneous initiation">
        <sequence resource="EMBL-CDS" id="AAH12410"/>
    </conflict>
    <text>Extended N-terminus.</text>
</comment>
<reference key="1">
    <citation type="journal article" date="2005" name="Science">
        <title>The transcriptional landscape of the mammalian genome.</title>
        <authorList>
            <person name="Carninci P."/>
            <person name="Kasukawa T."/>
            <person name="Katayama S."/>
            <person name="Gough J."/>
            <person name="Frith M.C."/>
            <person name="Maeda N."/>
            <person name="Oyama R."/>
            <person name="Ravasi T."/>
            <person name="Lenhard B."/>
            <person name="Wells C."/>
            <person name="Kodzius R."/>
            <person name="Shimokawa K."/>
            <person name="Bajic V.B."/>
            <person name="Brenner S.E."/>
            <person name="Batalov S."/>
            <person name="Forrest A.R."/>
            <person name="Zavolan M."/>
            <person name="Davis M.J."/>
            <person name="Wilming L.G."/>
            <person name="Aidinis V."/>
            <person name="Allen J.E."/>
            <person name="Ambesi-Impiombato A."/>
            <person name="Apweiler R."/>
            <person name="Aturaliya R.N."/>
            <person name="Bailey T.L."/>
            <person name="Bansal M."/>
            <person name="Baxter L."/>
            <person name="Beisel K.W."/>
            <person name="Bersano T."/>
            <person name="Bono H."/>
            <person name="Chalk A.M."/>
            <person name="Chiu K.P."/>
            <person name="Choudhary V."/>
            <person name="Christoffels A."/>
            <person name="Clutterbuck D.R."/>
            <person name="Crowe M.L."/>
            <person name="Dalla E."/>
            <person name="Dalrymple B.P."/>
            <person name="de Bono B."/>
            <person name="Della Gatta G."/>
            <person name="di Bernardo D."/>
            <person name="Down T."/>
            <person name="Engstrom P."/>
            <person name="Fagiolini M."/>
            <person name="Faulkner G."/>
            <person name="Fletcher C.F."/>
            <person name="Fukushima T."/>
            <person name="Furuno M."/>
            <person name="Futaki S."/>
            <person name="Gariboldi M."/>
            <person name="Georgii-Hemming P."/>
            <person name="Gingeras T.R."/>
            <person name="Gojobori T."/>
            <person name="Green R.E."/>
            <person name="Gustincich S."/>
            <person name="Harbers M."/>
            <person name="Hayashi Y."/>
            <person name="Hensch T.K."/>
            <person name="Hirokawa N."/>
            <person name="Hill D."/>
            <person name="Huminiecki L."/>
            <person name="Iacono M."/>
            <person name="Ikeo K."/>
            <person name="Iwama A."/>
            <person name="Ishikawa T."/>
            <person name="Jakt M."/>
            <person name="Kanapin A."/>
            <person name="Katoh M."/>
            <person name="Kawasawa Y."/>
            <person name="Kelso J."/>
            <person name="Kitamura H."/>
            <person name="Kitano H."/>
            <person name="Kollias G."/>
            <person name="Krishnan S.P."/>
            <person name="Kruger A."/>
            <person name="Kummerfeld S.K."/>
            <person name="Kurochkin I.V."/>
            <person name="Lareau L.F."/>
            <person name="Lazarevic D."/>
            <person name="Lipovich L."/>
            <person name="Liu J."/>
            <person name="Liuni S."/>
            <person name="McWilliam S."/>
            <person name="Madan Babu M."/>
            <person name="Madera M."/>
            <person name="Marchionni L."/>
            <person name="Matsuda H."/>
            <person name="Matsuzawa S."/>
            <person name="Miki H."/>
            <person name="Mignone F."/>
            <person name="Miyake S."/>
            <person name="Morris K."/>
            <person name="Mottagui-Tabar S."/>
            <person name="Mulder N."/>
            <person name="Nakano N."/>
            <person name="Nakauchi H."/>
            <person name="Ng P."/>
            <person name="Nilsson R."/>
            <person name="Nishiguchi S."/>
            <person name="Nishikawa S."/>
            <person name="Nori F."/>
            <person name="Ohara O."/>
            <person name="Okazaki Y."/>
            <person name="Orlando V."/>
            <person name="Pang K.C."/>
            <person name="Pavan W.J."/>
            <person name="Pavesi G."/>
            <person name="Pesole G."/>
            <person name="Petrovsky N."/>
            <person name="Piazza S."/>
            <person name="Reed J."/>
            <person name="Reid J.F."/>
            <person name="Ring B.Z."/>
            <person name="Ringwald M."/>
            <person name="Rost B."/>
            <person name="Ruan Y."/>
            <person name="Salzberg S.L."/>
            <person name="Sandelin A."/>
            <person name="Schneider C."/>
            <person name="Schoenbach C."/>
            <person name="Sekiguchi K."/>
            <person name="Semple C.A."/>
            <person name="Seno S."/>
            <person name="Sessa L."/>
            <person name="Sheng Y."/>
            <person name="Shibata Y."/>
            <person name="Shimada H."/>
            <person name="Shimada K."/>
            <person name="Silva D."/>
            <person name="Sinclair B."/>
            <person name="Sperling S."/>
            <person name="Stupka E."/>
            <person name="Sugiura K."/>
            <person name="Sultana R."/>
            <person name="Takenaka Y."/>
            <person name="Taki K."/>
            <person name="Tammoja K."/>
            <person name="Tan S.L."/>
            <person name="Tang S."/>
            <person name="Taylor M.S."/>
            <person name="Tegner J."/>
            <person name="Teichmann S.A."/>
            <person name="Ueda H.R."/>
            <person name="van Nimwegen E."/>
            <person name="Verardo R."/>
            <person name="Wei C.L."/>
            <person name="Yagi K."/>
            <person name="Yamanishi H."/>
            <person name="Zabarovsky E."/>
            <person name="Zhu S."/>
            <person name="Zimmer A."/>
            <person name="Hide W."/>
            <person name="Bult C."/>
            <person name="Grimmond S.M."/>
            <person name="Teasdale R.D."/>
            <person name="Liu E.T."/>
            <person name="Brusic V."/>
            <person name="Quackenbush J."/>
            <person name="Wahlestedt C."/>
            <person name="Mattick J.S."/>
            <person name="Hume D.A."/>
            <person name="Kai C."/>
            <person name="Sasaki D."/>
            <person name="Tomaru Y."/>
            <person name="Fukuda S."/>
            <person name="Kanamori-Katayama M."/>
            <person name="Suzuki M."/>
            <person name="Aoki J."/>
            <person name="Arakawa T."/>
            <person name="Iida J."/>
            <person name="Imamura K."/>
            <person name="Itoh M."/>
            <person name="Kato T."/>
            <person name="Kawaji H."/>
            <person name="Kawagashira N."/>
            <person name="Kawashima T."/>
            <person name="Kojima M."/>
            <person name="Kondo S."/>
            <person name="Konno H."/>
            <person name="Nakano K."/>
            <person name="Ninomiya N."/>
            <person name="Nishio T."/>
            <person name="Okada M."/>
            <person name="Plessy C."/>
            <person name="Shibata K."/>
            <person name="Shiraki T."/>
            <person name="Suzuki S."/>
            <person name="Tagami M."/>
            <person name="Waki K."/>
            <person name="Watahiki A."/>
            <person name="Okamura-Oho Y."/>
            <person name="Suzuki H."/>
            <person name="Kawai J."/>
            <person name="Hayashizaki Y."/>
        </authorList>
    </citation>
    <scope>NUCLEOTIDE SEQUENCE [LARGE SCALE MRNA]</scope>
    <source>
        <strain>C57BL/6J</strain>
        <tissue>Heart</tissue>
    </source>
</reference>
<reference key="2">
    <citation type="journal article" date="2009" name="PLoS Biol.">
        <title>Lineage-specific biology revealed by a finished genome assembly of the mouse.</title>
        <authorList>
            <person name="Church D.M."/>
            <person name="Goodstadt L."/>
            <person name="Hillier L.W."/>
            <person name="Zody M.C."/>
            <person name="Goldstein S."/>
            <person name="She X."/>
            <person name="Bult C.J."/>
            <person name="Agarwala R."/>
            <person name="Cherry J.L."/>
            <person name="DiCuccio M."/>
            <person name="Hlavina W."/>
            <person name="Kapustin Y."/>
            <person name="Meric P."/>
            <person name="Maglott D."/>
            <person name="Birtle Z."/>
            <person name="Marques A.C."/>
            <person name="Graves T."/>
            <person name="Zhou S."/>
            <person name="Teague B."/>
            <person name="Potamousis K."/>
            <person name="Churas C."/>
            <person name="Place M."/>
            <person name="Herschleb J."/>
            <person name="Runnheim R."/>
            <person name="Forrest D."/>
            <person name="Amos-Landgraf J."/>
            <person name="Schwartz D.C."/>
            <person name="Cheng Z."/>
            <person name="Lindblad-Toh K."/>
            <person name="Eichler E.E."/>
            <person name="Ponting C.P."/>
        </authorList>
    </citation>
    <scope>NUCLEOTIDE SEQUENCE [LARGE SCALE GENOMIC DNA]</scope>
    <source>
        <strain>C57BL/6J</strain>
    </source>
</reference>
<reference key="3">
    <citation type="journal article" date="2004" name="Genome Res.">
        <title>The status, quality, and expansion of the NIH full-length cDNA project: the Mammalian Gene Collection (MGC).</title>
        <authorList>
            <consortium name="The MGC Project Team"/>
        </authorList>
    </citation>
    <scope>NUCLEOTIDE SEQUENCE [LARGE SCALE MRNA]</scope>
    <source>
        <tissue>Brain</tissue>
        <tissue>Colon</tissue>
    </source>
</reference>
<proteinExistence type="evidence at transcript level"/>
<feature type="chain" id="PRO_0000047711" description="Zinc finger and BTB domain-containing protein 3">
    <location>
        <begin position="1"/>
        <end position="518"/>
    </location>
</feature>
<feature type="domain" description="BTB" evidence="2">
    <location>
        <begin position="24"/>
        <end position="92"/>
    </location>
</feature>
<feature type="zinc finger region" description="C2H2-type 1" evidence="3">
    <location>
        <begin position="418"/>
        <end position="440"/>
    </location>
</feature>
<feature type="zinc finger region" description="C2H2-type 2" evidence="3">
    <location>
        <begin position="446"/>
        <end position="469"/>
    </location>
</feature>
<feature type="region of interest" description="Disordered" evidence="4">
    <location>
        <begin position="126"/>
        <end position="207"/>
    </location>
</feature>
<feature type="region of interest" description="Disordered" evidence="4">
    <location>
        <begin position="310"/>
        <end position="338"/>
    </location>
</feature>
<feature type="region of interest" description="Disordered" evidence="4">
    <location>
        <begin position="349"/>
        <end position="368"/>
    </location>
</feature>
<feature type="region of interest" description="Disordered" evidence="4">
    <location>
        <begin position="472"/>
        <end position="518"/>
    </location>
</feature>
<feature type="compositionally biased region" description="Basic and acidic residues" evidence="4">
    <location>
        <begin position="472"/>
        <end position="481"/>
    </location>
</feature>
<feature type="modified residue" description="Phosphoserine" evidence="1">
    <location>
        <position position="308"/>
    </location>
</feature>
<feature type="modified residue" description="Phosphoserine" evidence="1">
    <location>
        <position position="495"/>
    </location>
</feature>
<feature type="cross-link" description="Glycyl lysine isopeptide (Lys-Gly) (interchain with G-Cter in SUMO2)" evidence="1">
    <location>
        <position position="131"/>
    </location>
</feature>
<feature type="cross-link" description="Glycyl lysine isopeptide (Lys-Gly) (interchain with G-Cter in SUMO2)" evidence="1">
    <location>
        <position position="132"/>
    </location>
</feature>
<feature type="cross-link" description="Glycyl lysine isopeptide (Lys-Gly) (interchain with G-Cter in SUMO2)" evidence="1">
    <location>
        <position position="478"/>
    </location>
</feature>
<feature type="sequence conflict" description="In Ref. 3; AAH12410." evidence="5" ref="3">
    <original>R</original>
    <variation>G</variation>
    <location>
        <position position="321"/>
    </location>
</feature>
<organism>
    <name type="scientific">Mus musculus</name>
    <name type="common">Mouse</name>
    <dbReference type="NCBI Taxonomy" id="10090"/>
    <lineage>
        <taxon>Eukaryota</taxon>
        <taxon>Metazoa</taxon>
        <taxon>Chordata</taxon>
        <taxon>Craniata</taxon>
        <taxon>Vertebrata</taxon>
        <taxon>Euteleostomi</taxon>
        <taxon>Mammalia</taxon>
        <taxon>Eutheria</taxon>
        <taxon>Euarchontoglires</taxon>
        <taxon>Glires</taxon>
        <taxon>Rodentia</taxon>
        <taxon>Myomorpha</taxon>
        <taxon>Muroidea</taxon>
        <taxon>Muridae</taxon>
        <taxon>Murinae</taxon>
        <taxon>Mus</taxon>
        <taxon>Mus</taxon>
    </lineage>
</organism>
<name>ZBTB3_MOUSE</name>
<keyword id="KW-0238">DNA-binding</keyword>
<keyword id="KW-1017">Isopeptide bond</keyword>
<keyword id="KW-0479">Metal-binding</keyword>
<keyword id="KW-0539">Nucleus</keyword>
<keyword id="KW-0597">Phosphoprotein</keyword>
<keyword id="KW-1185">Reference proteome</keyword>
<keyword id="KW-0677">Repeat</keyword>
<keyword id="KW-0804">Transcription</keyword>
<keyword id="KW-0805">Transcription regulation</keyword>
<keyword id="KW-0832">Ubl conjugation</keyword>
<keyword id="KW-0862">Zinc</keyword>
<keyword id="KW-0863">Zinc-finger</keyword>
<gene>
    <name type="primary">Zbtb3</name>
</gene>
<sequence length="518" mass="55901">MEFPEHSQQLLQSLREQRSQGFLCDCTVMVGSTQFLAHRAVLASCSPFFQLFYKERELDKRDLVCIHNEIVTAPAFGLLLDFMYAGQLALRGDTPLEDVLAAASYLHMNDIVKVCKQRLQARALAEADSTKKEEETNPASLEFLSGSSRGPQPLLASVEPSARWNKEEWKGPATPLPIAHPADEPPVSGGADTTQPSMEVDSSHLRAPPPPVADVSVSLASPSSSTETIPVNYFSSGLPGVSVEPLTPLDVVPESLRVVEPRDTGGPLQGFYPPAPAPPPAPAPVLSQAPAPVEAELVQVKVEAIVISDEEADLSEEQPHRSEGLFPPGGAVYGGQPSQAEAFEEPGATGLEEVGPSDHFLPPESHLPYHLLPGPGQYHRGLVTSPLPAPAALHEPLYPPPEYEAAQGSFGNFTEDVPTCKTCGKTFSCSYTLRRHATVHTRERPYECRYCLRSYTQSGDLYRHIRKAHNEDLAKRSKPDPEASTILGVQPLSGSQTTERHSSGGGGPPKEFALGPKN</sequence>
<evidence type="ECO:0000250" key="1">
    <source>
        <dbReference type="UniProtKB" id="Q9H5J0"/>
    </source>
</evidence>
<evidence type="ECO:0000255" key="2">
    <source>
        <dbReference type="PROSITE-ProRule" id="PRU00037"/>
    </source>
</evidence>
<evidence type="ECO:0000255" key="3">
    <source>
        <dbReference type="PROSITE-ProRule" id="PRU00042"/>
    </source>
</evidence>
<evidence type="ECO:0000256" key="4">
    <source>
        <dbReference type="SAM" id="MobiDB-lite"/>
    </source>
</evidence>
<evidence type="ECO:0000305" key="5"/>
<dbReference type="EMBL" id="AK049258">
    <property type="protein sequence ID" value="BAC33640.1"/>
    <property type="molecule type" value="mRNA"/>
</dbReference>
<dbReference type="EMBL" id="AK142256">
    <property type="protein sequence ID" value="BAE24996.1"/>
    <property type="molecule type" value="mRNA"/>
</dbReference>
<dbReference type="EMBL" id="AC129217">
    <property type="status" value="NOT_ANNOTATED_CDS"/>
    <property type="molecule type" value="Genomic_DNA"/>
</dbReference>
<dbReference type="EMBL" id="BC012410">
    <property type="protein sequence ID" value="AAH12410.1"/>
    <property type="status" value="ALT_INIT"/>
    <property type="molecule type" value="mRNA"/>
</dbReference>
<dbReference type="EMBL" id="BC119186">
    <property type="protein sequence ID" value="AAI19187.1"/>
    <property type="molecule type" value="mRNA"/>
</dbReference>
<dbReference type="EMBL" id="BC119188">
    <property type="protein sequence ID" value="AAI19189.1"/>
    <property type="molecule type" value="mRNA"/>
</dbReference>
<dbReference type="CCDS" id="CCDS29548.1"/>
<dbReference type="RefSeq" id="NP_001091707.1">
    <property type="nucleotide sequence ID" value="NM_001098237.2"/>
</dbReference>
<dbReference type="RefSeq" id="NP_598520.1">
    <property type="nucleotide sequence ID" value="NM_133759.4"/>
</dbReference>
<dbReference type="RefSeq" id="XP_006527482.1">
    <property type="nucleotide sequence ID" value="XM_006527419.3"/>
</dbReference>
<dbReference type="SMR" id="Q91X45"/>
<dbReference type="BioGRID" id="217367">
    <property type="interactions" value="5"/>
</dbReference>
<dbReference type="FunCoup" id="Q91X45">
    <property type="interactions" value="1959"/>
</dbReference>
<dbReference type="IntAct" id="Q91X45">
    <property type="interactions" value="5"/>
</dbReference>
<dbReference type="STRING" id="10090.ENSMUSP00000127746"/>
<dbReference type="iPTMnet" id="Q91X45"/>
<dbReference type="PhosphoSitePlus" id="Q91X45"/>
<dbReference type="jPOST" id="Q91X45"/>
<dbReference type="PaxDb" id="10090-ENSMUSP00000127746"/>
<dbReference type="ProteomicsDB" id="302039"/>
<dbReference type="Antibodypedia" id="14959">
    <property type="antibodies" value="148 antibodies from 21 providers"/>
</dbReference>
<dbReference type="DNASU" id="75291"/>
<dbReference type="Ensembl" id="ENSMUST00000172175.3">
    <property type="protein sequence ID" value="ENSMUSP00000127746.2"/>
    <property type="gene ID" value="ENSMUSG00000071661.8"/>
</dbReference>
<dbReference type="GeneID" id="75291"/>
<dbReference type="KEGG" id="mmu:75291"/>
<dbReference type="UCSC" id="uc008gnb.1">
    <property type="organism name" value="mouse"/>
</dbReference>
<dbReference type="AGR" id="MGI:1922541"/>
<dbReference type="CTD" id="79842"/>
<dbReference type="MGI" id="MGI:1922541">
    <property type="gene designation" value="Zbtb3"/>
</dbReference>
<dbReference type="VEuPathDB" id="HostDB:ENSMUSG00000071661"/>
<dbReference type="eggNOG" id="KOG1721">
    <property type="taxonomic scope" value="Eukaryota"/>
</dbReference>
<dbReference type="GeneTree" id="ENSGT00940000161486"/>
<dbReference type="HOGENOM" id="CLU_034521_0_0_1"/>
<dbReference type="InParanoid" id="Q91X45"/>
<dbReference type="OMA" id="YPRGLVT"/>
<dbReference type="OrthoDB" id="6077919at2759"/>
<dbReference type="PhylomeDB" id="Q91X45"/>
<dbReference type="TreeFam" id="TF330979"/>
<dbReference type="BioGRID-ORCS" id="75291">
    <property type="hits" value="1 hit in 79 CRISPR screens"/>
</dbReference>
<dbReference type="PRO" id="PR:Q91X45"/>
<dbReference type="Proteomes" id="UP000000589">
    <property type="component" value="Chromosome 19"/>
</dbReference>
<dbReference type="RNAct" id="Q91X45">
    <property type="molecule type" value="protein"/>
</dbReference>
<dbReference type="Bgee" id="ENSMUSG00000071661">
    <property type="expression patterns" value="Expressed in seminiferous tubule of testis and 95 other cell types or tissues"/>
</dbReference>
<dbReference type="GO" id="GO:0005634">
    <property type="term" value="C:nucleus"/>
    <property type="evidence" value="ECO:0007669"/>
    <property type="project" value="UniProtKB-SubCell"/>
</dbReference>
<dbReference type="GO" id="GO:0003677">
    <property type="term" value="F:DNA binding"/>
    <property type="evidence" value="ECO:0007669"/>
    <property type="project" value="UniProtKB-KW"/>
</dbReference>
<dbReference type="GO" id="GO:0008270">
    <property type="term" value="F:zinc ion binding"/>
    <property type="evidence" value="ECO:0007669"/>
    <property type="project" value="UniProtKB-KW"/>
</dbReference>
<dbReference type="CDD" id="cd18323">
    <property type="entry name" value="BTB_POZ_ZBTB3"/>
    <property type="match status" value="1"/>
</dbReference>
<dbReference type="FunFam" id="3.30.160.60:FF:000114">
    <property type="entry name" value="Zinc finger and BTB domain-containing protein 18"/>
    <property type="match status" value="1"/>
</dbReference>
<dbReference type="FunFam" id="3.30.710.10:FF:000021">
    <property type="entry name" value="Zinc finger and BTB domain-containing protein 18"/>
    <property type="match status" value="1"/>
</dbReference>
<dbReference type="FunFam" id="3.30.160.60:FF:000892">
    <property type="entry name" value="zinc finger and BTB domain-containing protein 3"/>
    <property type="match status" value="1"/>
</dbReference>
<dbReference type="Gene3D" id="3.30.160.60">
    <property type="entry name" value="Classic Zinc Finger"/>
    <property type="match status" value="2"/>
</dbReference>
<dbReference type="Gene3D" id="3.30.710.10">
    <property type="entry name" value="Potassium Channel Kv1.1, Chain A"/>
    <property type="match status" value="1"/>
</dbReference>
<dbReference type="InterPro" id="IPR000210">
    <property type="entry name" value="BTB/POZ_dom"/>
</dbReference>
<dbReference type="InterPro" id="IPR011333">
    <property type="entry name" value="SKP1/BTB/POZ_sf"/>
</dbReference>
<dbReference type="InterPro" id="IPR036236">
    <property type="entry name" value="Znf_C2H2_sf"/>
</dbReference>
<dbReference type="InterPro" id="IPR013087">
    <property type="entry name" value="Znf_C2H2_type"/>
</dbReference>
<dbReference type="PANTHER" id="PTHR24394:SF19">
    <property type="entry name" value="ZINC FINGER AND BTB DOMAIN-CONTAINING PROTEIN 3"/>
    <property type="match status" value="1"/>
</dbReference>
<dbReference type="PANTHER" id="PTHR24394">
    <property type="entry name" value="ZINC FINGER PROTEIN"/>
    <property type="match status" value="1"/>
</dbReference>
<dbReference type="Pfam" id="PF00651">
    <property type="entry name" value="BTB"/>
    <property type="match status" value="1"/>
</dbReference>
<dbReference type="Pfam" id="PF00096">
    <property type="entry name" value="zf-C2H2"/>
    <property type="match status" value="1"/>
</dbReference>
<dbReference type="SMART" id="SM00225">
    <property type="entry name" value="BTB"/>
    <property type="match status" value="1"/>
</dbReference>
<dbReference type="SMART" id="SM00355">
    <property type="entry name" value="ZnF_C2H2"/>
    <property type="match status" value="2"/>
</dbReference>
<dbReference type="SUPFAM" id="SSF57667">
    <property type="entry name" value="beta-beta-alpha zinc fingers"/>
    <property type="match status" value="1"/>
</dbReference>
<dbReference type="SUPFAM" id="SSF54695">
    <property type="entry name" value="POZ domain"/>
    <property type="match status" value="1"/>
</dbReference>
<dbReference type="PROSITE" id="PS50097">
    <property type="entry name" value="BTB"/>
    <property type="match status" value="1"/>
</dbReference>
<dbReference type="PROSITE" id="PS00028">
    <property type="entry name" value="ZINC_FINGER_C2H2_1"/>
    <property type="match status" value="2"/>
</dbReference>
<dbReference type="PROSITE" id="PS50157">
    <property type="entry name" value="ZINC_FINGER_C2H2_2"/>
    <property type="match status" value="2"/>
</dbReference>
<accession>Q91X45</accession>
<accession>Q3UQP3</accession>
<accession>Q8BIJ4</accession>